<protein>
    <recommendedName>
        <fullName evidence="1">NADH-quinone oxidoreductase subunit K</fullName>
        <ecNumber evidence="1">7.1.1.-</ecNumber>
    </recommendedName>
    <alternativeName>
        <fullName evidence="1">NADH dehydrogenase I subunit K</fullName>
    </alternativeName>
    <alternativeName>
        <fullName evidence="1">NDH-1 subunit K</fullName>
    </alternativeName>
</protein>
<reference key="1">
    <citation type="journal article" date="2009" name="PLoS Genet.">
        <title>Organised genome dynamics in the Escherichia coli species results in highly diverse adaptive paths.</title>
        <authorList>
            <person name="Touchon M."/>
            <person name="Hoede C."/>
            <person name="Tenaillon O."/>
            <person name="Barbe V."/>
            <person name="Baeriswyl S."/>
            <person name="Bidet P."/>
            <person name="Bingen E."/>
            <person name="Bonacorsi S."/>
            <person name="Bouchier C."/>
            <person name="Bouvet O."/>
            <person name="Calteau A."/>
            <person name="Chiapello H."/>
            <person name="Clermont O."/>
            <person name="Cruveiller S."/>
            <person name="Danchin A."/>
            <person name="Diard M."/>
            <person name="Dossat C."/>
            <person name="Karoui M.E."/>
            <person name="Frapy E."/>
            <person name="Garry L."/>
            <person name="Ghigo J.M."/>
            <person name="Gilles A.M."/>
            <person name="Johnson J."/>
            <person name="Le Bouguenec C."/>
            <person name="Lescat M."/>
            <person name="Mangenot S."/>
            <person name="Martinez-Jehanne V."/>
            <person name="Matic I."/>
            <person name="Nassif X."/>
            <person name="Oztas S."/>
            <person name="Petit M.A."/>
            <person name="Pichon C."/>
            <person name="Rouy Z."/>
            <person name="Ruf C.S."/>
            <person name="Schneider D."/>
            <person name="Tourret J."/>
            <person name="Vacherie B."/>
            <person name="Vallenet D."/>
            <person name="Medigue C."/>
            <person name="Rocha E.P.C."/>
            <person name="Denamur E."/>
        </authorList>
    </citation>
    <scope>NUCLEOTIDE SEQUENCE [LARGE SCALE GENOMIC DNA]</scope>
    <source>
        <strain>55989 / EAEC</strain>
    </source>
</reference>
<keyword id="KW-0997">Cell inner membrane</keyword>
<keyword id="KW-1003">Cell membrane</keyword>
<keyword id="KW-0472">Membrane</keyword>
<keyword id="KW-0520">NAD</keyword>
<keyword id="KW-0874">Quinone</keyword>
<keyword id="KW-1185">Reference proteome</keyword>
<keyword id="KW-1278">Translocase</keyword>
<keyword id="KW-0812">Transmembrane</keyword>
<keyword id="KW-1133">Transmembrane helix</keyword>
<keyword id="KW-0813">Transport</keyword>
<keyword id="KW-0830">Ubiquinone</keyword>
<comment type="function">
    <text evidence="1">NDH-1 shuttles electrons from NADH, via FMN and iron-sulfur (Fe-S) centers, to quinones in the respiratory chain. The immediate electron acceptor for the enzyme in this species is believed to be ubiquinone. Couples the redox reaction to proton translocation (for every two electrons transferred, four hydrogen ions are translocated across the cytoplasmic membrane), and thus conserves the redox energy in a proton gradient.</text>
</comment>
<comment type="catalytic activity">
    <reaction evidence="1">
        <text>a quinone + NADH + 5 H(+)(in) = a quinol + NAD(+) + 4 H(+)(out)</text>
        <dbReference type="Rhea" id="RHEA:57888"/>
        <dbReference type="ChEBI" id="CHEBI:15378"/>
        <dbReference type="ChEBI" id="CHEBI:24646"/>
        <dbReference type="ChEBI" id="CHEBI:57540"/>
        <dbReference type="ChEBI" id="CHEBI:57945"/>
        <dbReference type="ChEBI" id="CHEBI:132124"/>
    </reaction>
</comment>
<comment type="subunit">
    <text evidence="1">NDH-1 is composed of 13 different subunits. Subunits NuoA, H, J, K, L, M, N constitute the membrane sector of the complex.</text>
</comment>
<comment type="subcellular location">
    <subcellularLocation>
        <location evidence="1">Cell inner membrane</location>
        <topology evidence="1">Multi-pass membrane protein</topology>
    </subcellularLocation>
</comment>
<comment type="similarity">
    <text evidence="1">Belongs to the complex I subunit 4L family.</text>
</comment>
<accession>B7LAU1</accession>
<proteinExistence type="inferred from homology"/>
<sequence>MIPLQHGLILAAILFVLGLTGLVIRRNLLFMLIGLEIMINASALAFVVAGSYWGQTDGQVMYILAISLAAAEASIGLALLLQLHRRRQNLNIDSVSEMRG</sequence>
<organism>
    <name type="scientific">Escherichia coli (strain 55989 / EAEC)</name>
    <dbReference type="NCBI Taxonomy" id="585055"/>
    <lineage>
        <taxon>Bacteria</taxon>
        <taxon>Pseudomonadati</taxon>
        <taxon>Pseudomonadota</taxon>
        <taxon>Gammaproteobacteria</taxon>
        <taxon>Enterobacterales</taxon>
        <taxon>Enterobacteriaceae</taxon>
        <taxon>Escherichia</taxon>
    </lineage>
</organism>
<feature type="chain" id="PRO_0000390040" description="NADH-quinone oxidoreductase subunit K">
    <location>
        <begin position="1"/>
        <end position="100"/>
    </location>
</feature>
<feature type="transmembrane region" description="Helical" evidence="1">
    <location>
        <begin position="4"/>
        <end position="24"/>
    </location>
</feature>
<feature type="transmembrane region" description="Helical" evidence="1">
    <location>
        <begin position="28"/>
        <end position="48"/>
    </location>
</feature>
<feature type="transmembrane region" description="Helical" evidence="1">
    <location>
        <begin position="60"/>
        <end position="80"/>
    </location>
</feature>
<gene>
    <name evidence="1" type="primary">nuoK</name>
    <name type="ordered locus">EC55989_2523</name>
</gene>
<name>NUOK_ECO55</name>
<dbReference type="EC" id="7.1.1.-" evidence="1"/>
<dbReference type="EMBL" id="CU928145">
    <property type="protein sequence ID" value="CAU98391.1"/>
    <property type="molecule type" value="Genomic_DNA"/>
</dbReference>
<dbReference type="RefSeq" id="WP_000612644.1">
    <property type="nucleotide sequence ID" value="NZ_CP028304.1"/>
</dbReference>
<dbReference type="SMR" id="B7LAU1"/>
<dbReference type="GeneID" id="93033872"/>
<dbReference type="KEGG" id="eck:EC55989_2523"/>
<dbReference type="HOGENOM" id="CLU_144724_0_1_6"/>
<dbReference type="Proteomes" id="UP000000746">
    <property type="component" value="Chromosome"/>
</dbReference>
<dbReference type="GO" id="GO:0030964">
    <property type="term" value="C:NADH dehydrogenase complex"/>
    <property type="evidence" value="ECO:0007669"/>
    <property type="project" value="TreeGrafter"/>
</dbReference>
<dbReference type="GO" id="GO:0005886">
    <property type="term" value="C:plasma membrane"/>
    <property type="evidence" value="ECO:0007669"/>
    <property type="project" value="UniProtKB-SubCell"/>
</dbReference>
<dbReference type="GO" id="GO:0050136">
    <property type="term" value="F:NADH:ubiquinone reductase (non-electrogenic) activity"/>
    <property type="evidence" value="ECO:0007669"/>
    <property type="project" value="UniProtKB-UniRule"/>
</dbReference>
<dbReference type="GO" id="GO:0048038">
    <property type="term" value="F:quinone binding"/>
    <property type="evidence" value="ECO:0007669"/>
    <property type="project" value="UniProtKB-KW"/>
</dbReference>
<dbReference type="GO" id="GO:0042773">
    <property type="term" value="P:ATP synthesis coupled electron transport"/>
    <property type="evidence" value="ECO:0007669"/>
    <property type="project" value="InterPro"/>
</dbReference>
<dbReference type="FunFam" id="1.10.287.3510:FF:000001">
    <property type="entry name" value="NADH-quinone oxidoreductase subunit K"/>
    <property type="match status" value="1"/>
</dbReference>
<dbReference type="Gene3D" id="1.10.287.3510">
    <property type="match status" value="1"/>
</dbReference>
<dbReference type="HAMAP" id="MF_01456">
    <property type="entry name" value="NDH1_NuoK"/>
    <property type="match status" value="1"/>
</dbReference>
<dbReference type="InterPro" id="IPR001133">
    <property type="entry name" value="NADH_UbQ_OxRdtase_chain4L/K"/>
</dbReference>
<dbReference type="InterPro" id="IPR039428">
    <property type="entry name" value="NUOK/Mnh_C1-like"/>
</dbReference>
<dbReference type="NCBIfam" id="NF004319">
    <property type="entry name" value="PRK05715.1-1"/>
    <property type="match status" value="1"/>
</dbReference>
<dbReference type="NCBIfam" id="NF004320">
    <property type="entry name" value="PRK05715.1-2"/>
    <property type="match status" value="1"/>
</dbReference>
<dbReference type="PANTHER" id="PTHR11434:SF16">
    <property type="entry name" value="NADH-UBIQUINONE OXIDOREDUCTASE CHAIN 4L"/>
    <property type="match status" value="1"/>
</dbReference>
<dbReference type="PANTHER" id="PTHR11434">
    <property type="entry name" value="NADH-UBIQUINONE OXIDOREDUCTASE SUBUNIT ND4L"/>
    <property type="match status" value="1"/>
</dbReference>
<dbReference type="Pfam" id="PF00420">
    <property type="entry name" value="Oxidored_q2"/>
    <property type="match status" value="1"/>
</dbReference>
<evidence type="ECO:0000255" key="1">
    <source>
        <dbReference type="HAMAP-Rule" id="MF_01456"/>
    </source>
</evidence>